<organism>
    <name type="scientific">Homo sapiens</name>
    <name type="common">Human</name>
    <dbReference type="NCBI Taxonomy" id="9606"/>
    <lineage>
        <taxon>Eukaryota</taxon>
        <taxon>Metazoa</taxon>
        <taxon>Chordata</taxon>
        <taxon>Craniata</taxon>
        <taxon>Vertebrata</taxon>
        <taxon>Euteleostomi</taxon>
        <taxon>Mammalia</taxon>
        <taxon>Eutheria</taxon>
        <taxon>Euarchontoglires</taxon>
        <taxon>Primates</taxon>
        <taxon>Haplorrhini</taxon>
        <taxon>Catarrhini</taxon>
        <taxon>Hominidae</taxon>
        <taxon>Homo</taxon>
    </lineage>
</organism>
<name>TSN32_HUMAN</name>
<protein>
    <recommendedName>
        <fullName>Tetraspanin-32</fullName>
        <shortName>Tspan-32</shortName>
    </recommendedName>
    <alternativeName>
        <fullName>Protein Phemx</fullName>
    </alternativeName>
</protein>
<gene>
    <name type="primary">TSPAN32</name>
    <name type="synonym">PHEMX</name>
    <name type="synonym">TSSC6</name>
</gene>
<accession>Q96QS1</accession>
<accession>Q96KX4</accession>
<accession>Q9HC50</accession>
<accession>Q9HC51</accession>
<accession>Q9Y5U1</accession>
<proteinExistence type="evidence at protein level"/>
<evidence type="ECO:0000255" key="1"/>
<evidence type="ECO:0000269" key="2">
    <source>
    </source>
</evidence>
<evidence type="ECO:0000269" key="3">
    <source>
    </source>
</evidence>
<evidence type="ECO:0000303" key="4">
    <source>
    </source>
</evidence>
<evidence type="ECO:0000303" key="5">
    <source>
    </source>
</evidence>
<evidence type="ECO:0000303" key="6">
    <source>
    </source>
</evidence>
<evidence type="ECO:0000305" key="7"/>
<reference key="1">
    <citation type="journal article" date="1999" name="Hum. Mol. Genet.">
        <title>Two novel genes in the center of the 11p15 imprinted domain escape genomic imprinting.</title>
        <authorList>
            <person name="Lee M.P."/>
            <person name="Brandenburg S."/>
            <person name="Landes G.M."/>
            <person name="Adams M."/>
            <person name="Miller G."/>
            <person name="Feinberg A.P."/>
        </authorList>
    </citation>
    <scope>NUCLEOTIDE SEQUENCE [MRNA] (ISOFORM 2)</scope>
    <scope>TISSUE SPECIFICITY</scope>
</reference>
<reference key="2">
    <citation type="journal article" date="2001" name="Biochim. Biophys. Acta">
        <title>Molecular characterisation of mouse and human TSSC6: evidence that TSSC6 is a genuine member of the tetraspanin superfamily and is expressed specifically in haematopoietic organs.</title>
        <authorList>
            <person name="Robb L."/>
            <person name="Tarrant J."/>
            <person name="Groom J."/>
            <person name="Ibrahim M."/>
            <person name="Li R."/>
            <person name="Borobakas B."/>
            <person name="Wright M.D."/>
        </authorList>
    </citation>
    <scope>NUCLEOTIDE SEQUENCE [MRNA] (ISOFORM 1)</scope>
</reference>
<reference key="3">
    <citation type="journal article" date="2004" name="Genome Res.">
        <title>The status, quality, and expansion of the NIH full-length cDNA project: the Mammalian Gene Collection (MGC).</title>
        <authorList>
            <consortium name="The MGC Project Team"/>
        </authorList>
    </citation>
    <scope>NUCLEOTIDE SEQUENCE [LARGE SCALE MRNA] (ISOFORM 5)</scope>
    <source>
        <tissue>Lung</tissue>
    </source>
</reference>
<reference key="4">
    <citation type="journal article" date="2000" name="Genomics">
        <title>Phemx, a novel mouse gene expressed in hematopoietic cells maps to the imprinted cluster on distal chromosome 7.</title>
        <authorList>
            <person name="Nicholson R.H."/>
            <person name="Pantano S."/>
            <person name="Eliason J.F."/>
            <person name="Galy A."/>
            <person name="Weiler S."/>
            <person name="Kaplan J."/>
            <person name="Hughes M.R."/>
            <person name="Ko M.S.H."/>
        </authorList>
    </citation>
    <scope>NUCLEOTIDE SEQUENCE [MRNA] OF 33-320 (ISOFORMS 3 AND 4)</scope>
    <scope>DEVELOPMENTAL STAGE</scope>
</reference>
<reference key="5">
    <citation type="journal article" date="2004" name="Genome Biol.">
        <title>An unappreciated role for RNA surveillance.</title>
        <authorList>
            <person name="Hillman R.T."/>
            <person name="Green R.E."/>
            <person name="Brenner S.E."/>
        </authorList>
    </citation>
    <scope>SPLICE ISOFORM(S) THAT ARE POTENTIAL NMD TARGET(S)</scope>
</reference>
<keyword id="KW-0025">Alternative splicing</keyword>
<keyword id="KW-0472">Membrane</keyword>
<keyword id="KW-1267">Proteomics identification</keyword>
<keyword id="KW-1185">Reference proteome</keyword>
<keyword id="KW-0812">Transmembrane</keyword>
<keyword id="KW-1133">Transmembrane helix</keyword>
<comment type="subcellular location">
    <subcellularLocation>
        <location evidence="7">Membrane</location>
        <topology evidence="7">Multi-pass membrane protein</topology>
    </subcellularLocation>
</comment>
<comment type="alternative products">
    <event type="alternative splicing"/>
    <isoform>
        <id>Q96QS1-1</id>
        <name>1</name>
        <sequence type="displayed"/>
    </isoform>
    <isoform>
        <id>Q96QS1-2</id>
        <name>2</name>
        <sequence type="described" ref="VSP_003932"/>
    </isoform>
    <isoform>
        <id>Q96QS1-3</id>
        <name>3</name>
        <sequence type="described" ref="VSP_003937 VSP_003938"/>
    </isoform>
    <isoform>
        <id>Q96QS1-4</id>
        <name>4</name>
        <sequence type="described" ref="VSP_003932 VSP_003933 VSP_003934"/>
    </isoform>
    <isoform>
        <id>Q96QS1-5</id>
        <name>5</name>
        <sequence type="described" ref="VSP_003935 VSP_003936"/>
    </isoform>
    <text>Additional isoforms seem to exist. Experimental confirmation may be lacking for some isoforms.</text>
</comment>
<comment type="tissue specificity">
    <text evidence="2">Expressed ubiquitously at low levels. High levels of expression are confined to hematopoietic tissues including peripheral blood leukocytes, thymus and spleen.</text>
</comment>
<comment type="developmental stage">
    <text evidence="3">Expressed from early embryogenesis through to adulthood.</text>
</comment>
<comment type="miscellaneous">
    <molecule>Isoform 4</molecule>
    <text evidence="7">May be produced at very low levels due to a premature stop codon in the mRNA, leading to nonsense-mediated mRNA decay.</text>
</comment>
<comment type="miscellaneous">
    <molecule>Isoform 5</molecule>
    <text evidence="7">May be produced at very low levels due to a premature stop codon in the mRNA, leading to nonsense-mediated mRNA decay.</text>
</comment>
<comment type="similarity">
    <text evidence="7">Belongs to the tetraspanin (TM4SF) family.</text>
</comment>
<feature type="chain" id="PRO_0000219278" description="Tetraspanin-32">
    <location>
        <begin position="1"/>
        <end position="320"/>
    </location>
</feature>
<feature type="transmembrane region" description="Helical" evidence="1">
    <location>
        <begin position="14"/>
        <end position="34"/>
    </location>
</feature>
<feature type="transmembrane region" description="Helical" evidence="1">
    <location>
        <begin position="60"/>
        <end position="80"/>
    </location>
</feature>
<feature type="transmembrane region" description="Helical" evidence="1">
    <location>
        <begin position="90"/>
        <end position="110"/>
    </location>
</feature>
<feature type="transmembrane region" description="Helical" evidence="1">
    <location>
        <begin position="203"/>
        <end position="223"/>
    </location>
</feature>
<feature type="splice variant" id="VSP_003932" description="In isoform 2 and isoform 4." evidence="4 5">
    <location>
        <begin position="1"/>
        <end position="30"/>
    </location>
</feature>
<feature type="splice variant" id="VSP_003933" description="In isoform 4." evidence="5">
    <original>GTSHVRRQELAAIQDVFL</original>
    <variation>VSVLWEEVSFQPSGEHRG</variation>
    <location>
        <begin position="137"/>
        <end position="154"/>
    </location>
</feature>
<feature type="splice variant" id="VSP_003934" description="In isoform 4." evidence="5">
    <location>
        <begin position="155"/>
        <end position="320"/>
    </location>
</feature>
<feature type="splice variant" id="VSP_003935" description="In isoform 5." evidence="6">
    <original>VSALLFSSFLWFAIRCGCSLDRKGKYTLTPRACGRQPQEPSLLRCSQGG</original>
    <variation>LGPQGQIHPDPTSMWPPAPGAQPLEMLPGWTHTLSPLRSSCYWSKRMLG</variation>
    <location>
        <begin position="210"/>
        <end position="258"/>
    </location>
</feature>
<feature type="splice variant" id="VSP_003937" description="In isoform 3." evidence="5">
    <original>ACGRQPQEPSLLR</original>
    <variation>SPGQKSRWAQWVP</variation>
    <location>
        <begin position="241"/>
        <end position="253"/>
    </location>
</feature>
<feature type="splice variant" id="VSP_003938" description="In isoform 3." evidence="5">
    <location>
        <begin position="254"/>
        <end position="320"/>
    </location>
</feature>
<feature type="splice variant" id="VSP_003936" description="In isoform 5." evidence="6">
    <location>
        <begin position="259"/>
        <end position="320"/>
    </location>
</feature>
<dbReference type="EMBL" id="AF125569">
    <property type="protein sequence ID" value="AAD23580.1"/>
    <property type="molecule type" value="mRNA"/>
</dbReference>
<dbReference type="EMBL" id="AY039001">
    <property type="protein sequence ID" value="AAK84431.1"/>
    <property type="molecule type" value="mRNA"/>
</dbReference>
<dbReference type="EMBL" id="BC016693">
    <property type="protein sequence ID" value="AAH16693.1"/>
    <property type="molecule type" value="mRNA"/>
</dbReference>
<dbReference type="EMBL" id="AF176070">
    <property type="protein sequence ID" value="AAG15840.1"/>
    <property type="molecule type" value="mRNA"/>
</dbReference>
<dbReference type="EMBL" id="AF176071">
    <property type="protein sequence ID" value="AAG15841.1"/>
    <property type="molecule type" value="mRNA"/>
</dbReference>
<dbReference type="CCDS" id="CCDS7733.1">
    <molecule id="Q96QS1-1"/>
</dbReference>
<dbReference type="RefSeq" id="NP_620591.3">
    <molecule id="Q96QS1-1"/>
    <property type="nucleotide sequence ID" value="NM_139022.3"/>
</dbReference>
<dbReference type="SMR" id="Q96QS1"/>
<dbReference type="BioGRID" id="115387">
    <property type="interactions" value="1"/>
</dbReference>
<dbReference type="FunCoup" id="Q96QS1">
    <property type="interactions" value="16"/>
</dbReference>
<dbReference type="STRING" id="9606.ENSP00000182290"/>
<dbReference type="iPTMnet" id="Q96QS1"/>
<dbReference type="PhosphoSitePlus" id="Q96QS1"/>
<dbReference type="BioMuta" id="TSPAN32"/>
<dbReference type="DMDM" id="20139069"/>
<dbReference type="MassIVE" id="Q96QS1"/>
<dbReference type="PaxDb" id="9606-ENSP00000182290"/>
<dbReference type="PeptideAtlas" id="Q96QS1"/>
<dbReference type="ProteomicsDB" id="77889">
    <molecule id="Q96QS1-1"/>
</dbReference>
<dbReference type="ProteomicsDB" id="77890">
    <molecule id="Q96QS1-2"/>
</dbReference>
<dbReference type="ProteomicsDB" id="77891">
    <molecule id="Q96QS1-3"/>
</dbReference>
<dbReference type="ProteomicsDB" id="77893">
    <molecule id="Q96QS1-5"/>
</dbReference>
<dbReference type="Antibodypedia" id="10387">
    <property type="antibodies" value="195 antibodies from 28 providers"/>
</dbReference>
<dbReference type="DNASU" id="10077"/>
<dbReference type="Ensembl" id="ENST00000182290.9">
    <molecule id="Q96QS1-1"/>
    <property type="protein sequence ID" value="ENSP00000182290.5"/>
    <property type="gene ID" value="ENSG00000064201.16"/>
</dbReference>
<dbReference type="Ensembl" id="ENST00000381121.7">
    <molecule id="Q96QS1-3"/>
    <property type="protein sequence ID" value="ENSP00000370513.3"/>
    <property type="gene ID" value="ENSG00000064201.16"/>
</dbReference>
<dbReference type="Ensembl" id="ENST00000446063.6">
    <molecule id="Q96QS1-5"/>
    <property type="protein sequence ID" value="ENSP00000395018.2"/>
    <property type="gene ID" value="ENSG00000064201.16"/>
</dbReference>
<dbReference type="GeneID" id="10077"/>
<dbReference type="KEGG" id="hsa:10077"/>
<dbReference type="MANE-Select" id="ENST00000182290.9">
    <property type="protein sequence ID" value="ENSP00000182290.5"/>
    <property type="RefSeq nucleotide sequence ID" value="NM_139022.3"/>
    <property type="RefSeq protein sequence ID" value="NP_620591.3"/>
</dbReference>
<dbReference type="UCSC" id="uc001lvy.2">
    <molecule id="Q96QS1-1"/>
    <property type="organism name" value="human"/>
</dbReference>
<dbReference type="AGR" id="HGNC:13410"/>
<dbReference type="CTD" id="10077"/>
<dbReference type="DisGeNET" id="10077"/>
<dbReference type="GeneCards" id="TSPAN32"/>
<dbReference type="HGNC" id="HGNC:13410">
    <property type="gene designation" value="TSPAN32"/>
</dbReference>
<dbReference type="HPA" id="ENSG00000064201">
    <property type="expression patterns" value="Group enriched (bone marrow, heart muscle, lymphoid tissue)"/>
</dbReference>
<dbReference type="MIM" id="603853">
    <property type="type" value="gene"/>
</dbReference>
<dbReference type="neXtProt" id="NX_Q96QS1"/>
<dbReference type="OpenTargets" id="ENSG00000064201"/>
<dbReference type="PharmGKB" id="PA33257"/>
<dbReference type="VEuPathDB" id="HostDB:ENSG00000064201"/>
<dbReference type="eggNOG" id="ENOG502S0ED">
    <property type="taxonomic scope" value="Eukaryota"/>
</dbReference>
<dbReference type="GeneTree" id="ENSGT00390000003287"/>
<dbReference type="HOGENOM" id="CLU_076116_0_0_1"/>
<dbReference type="InParanoid" id="Q96QS1"/>
<dbReference type="OMA" id="WAFCTSI"/>
<dbReference type="OrthoDB" id="9886271at2759"/>
<dbReference type="PAN-GO" id="Q96QS1">
    <property type="GO annotations" value="3 GO annotations based on evolutionary models"/>
</dbReference>
<dbReference type="PhylomeDB" id="Q96QS1"/>
<dbReference type="TreeFam" id="TF336277"/>
<dbReference type="PathwayCommons" id="Q96QS1"/>
<dbReference type="BioGRID-ORCS" id="10077">
    <property type="hits" value="10 hits in 1144 CRISPR screens"/>
</dbReference>
<dbReference type="ChiTaRS" id="TSPAN32">
    <property type="organism name" value="human"/>
</dbReference>
<dbReference type="GeneWiki" id="TSPAN32"/>
<dbReference type="GenomeRNAi" id="10077"/>
<dbReference type="Pharos" id="Q96QS1">
    <property type="development level" value="Tbio"/>
</dbReference>
<dbReference type="PRO" id="PR:Q96QS1"/>
<dbReference type="Proteomes" id="UP000005640">
    <property type="component" value="Chromosome 11"/>
</dbReference>
<dbReference type="RNAct" id="Q96QS1">
    <property type="molecule type" value="protein"/>
</dbReference>
<dbReference type="Bgee" id="ENSG00000064201">
    <property type="expression patterns" value="Expressed in granulocyte and 98 other cell types or tissues"/>
</dbReference>
<dbReference type="ExpressionAtlas" id="Q96QS1">
    <property type="expression patterns" value="baseline and differential"/>
</dbReference>
<dbReference type="GO" id="GO:0009986">
    <property type="term" value="C:cell surface"/>
    <property type="evidence" value="ECO:0007669"/>
    <property type="project" value="Ensembl"/>
</dbReference>
<dbReference type="GO" id="GO:0070442">
    <property type="term" value="C:integrin alphaIIb-beta3 complex"/>
    <property type="evidence" value="ECO:0007669"/>
    <property type="project" value="Ensembl"/>
</dbReference>
<dbReference type="GO" id="GO:0005886">
    <property type="term" value="C:plasma membrane"/>
    <property type="evidence" value="ECO:0000318"/>
    <property type="project" value="GO_Central"/>
</dbReference>
<dbReference type="GO" id="GO:0007267">
    <property type="term" value="P:cell-cell signaling"/>
    <property type="evidence" value="ECO:0000304"/>
    <property type="project" value="UniProtKB"/>
</dbReference>
<dbReference type="GO" id="GO:0007010">
    <property type="term" value="P:cytoskeleton organization"/>
    <property type="evidence" value="ECO:0007669"/>
    <property type="project" value="Ensembl"/>
</dbReference>
<dbReference type="GO" id="GO:0042832">
    <property type="term" value="P:defense response to protozoan"/>
    <property type="evidence" value="ECO:0007669"/>
    <property type="project" value="Ensembl"/>
</dbReference>
<dbReference type="GO" id="GO:0007229">
    <property type="term" value="P:integrin-mediated signaling pathway"/>
    <property type="evidence" value="ECO:0007669"/>
    <property type="project" value="Ensembl"/>
</dbReference>
<dbReference type="GO" id="GO:0030886">
    <property type="term" value="P:negative regulation of myeloid dendritic cell activation"/>
    <property type="evidence" value="ECO:0007669"/>
    <property type="project" value="Ensembl"/>
</dbReference>
<dbReference type="GO" id="GO:0042130">
    <property type="term" value="P:negative regulation of T cell proliferation"/>
    <property type="evidence" value="ECO:0007669"/>
    <property type="project" value="Ensembl"/>
</dbReference>
<dbReference type="GO" id="GO:0070527">
    <property type="term" value="P:platelet aggregation"/>
    <property type="evidence" value="ECO:0007669"/>
    <property type="project" value="Ensembl"/>
</dbReference>
<dbReference type="GO" id="GO:0050688">
    <property type="term" value="P:regulation of defense response to virus"/>
    <property type="evidence" value="ECO:0007669"/>
    <property type="project" value="Ensembl"/>
</dbReference>
<dbReference type="GO" id="GO:1900746">
    <property type="term" value="P:regulation of vascular endothelial growth factor signaling pathway"/>
    <property type="evidence" value="ECO:0000318"/>
    <property type="project" value="GO_Central"/>
</dbReference>
<dbReference type="GO" id="GO:0042098">
    <property type="term" value="P:T cell proliferation"/>
    <property type="evidence" value="ECO:0007669"/>
    <property type="project" value="Ensembl"/>
</dbReference>
<dbReference type="CDD" id="cd03153">
    <property type="entry name" value="PHEMX_like_LEL"/>
    <property type="match status" value="1"/>
</dbReference>
<dbReference type="FunFam" id="1.10.1450.10:FF:000022">
    <property type="entry name" value="Tetraspanin 32"/>
    <property type="match status" value="1"/>
</dbReference>
<dbReference type="Gene3D" id="1.10.1450.10">
    <property type="entry name" value="Tetraspanin"/>
    <property type="match status" value="1"/>
</dbReference>
<dbReference type="InterPro" id="IPR042782">
    <property type="entry name" value="PHEMX_LEL"/>
</dbReference>
<dbReference type="InterPro" id="IPR018499">
    <property type="entry name" value="Tetraspanin/Peripherin"/>
</dbReference>
<dbReference type="InterPro" id="IPR008952">
    <property type="entry name" value="Tetraspanin_EC2_sf"/>
</dbReference>
<dbReference type="Pfam" id="PF00335">
    <property type="entry name" value="Tetraspanin"/>
    <property type="match status" value="1"/>
</dbReference>
<dbReference type="SUPFAM" id="SSF48652">
    <property type="entry name" value="Tetraspanin"/>
    <property type="match status" value="1"/>
</dbReference>
<sequence length="320" mass="34631">MGPWSRVRVAKCQMLVTCFFILLLGLSVATMVTLTYFGAHFAVIRRASLEKNPYQAVHQWAFSAGLSLVGLLTLGAVLSAAATVREAQGLMAGGFLCFSLAFCAQVQVVFWRLHSPTQVEDAMLDTYDLVYEQAMKGTSHVRRQELAAIQDVFLCCGKKSPFSRLGSTEADLCQGEEAAREDCLQGIRSFLRTHQQVASSLTSIGLALTVSALLFSSFLWFAIRCGCSLDRKGKYTLTPRACGRQPQEPSLLRCSQGGPTHCLHSEAVAIGPRGCSGSLRWLQESDAAPLPLSCHLAAHRALQGRSRGGLSGCPERGLSD</sequence>